<name>NADK_BIFLD</name>
<keyword id="KW-0067">ATP-binding</keyword>
<keyword id="KW-0963">Cytoplasm</keyword>
<keyword id="KW-0418">Kinase</keyword>
<keyword id="KW-0520">NAD</keyword>
<keyword id="KW-0521">NADP</keyword>
<keyword id="KW-0547">Nucleotide-binding</keyword>
<keyword id="KW-0808">Transferase</keyword>
<organism>
    <name type="scientific">Bifidobacterium longum (strain DJO10A)</name>
    <dbReference type="NCBI Taxonomy" id="205913"/>
    <lineage>
        <taxon>Bacteria</taxon>
        <taxon>Bacillati</taxon>
        <taxon>Actinomycetota</taxon>
        <taxon>Actinomycetes</taxon>
        <taxon>Bifidobacteriales</taxon>
        <taxon>Bifidobacteriaceae</taxon>
        <taxon>Bifidobacterium</taxon>
    </lineage>
</organism>
<gene>
    <name evidence="1" type="primary">nadK</name>
    <name type="ordered locus">BLD_0794</name>
</gene>
<evidence type="ECO:0000255" key="1">
    <source>
        <dbReference type="HAMAP-Rule" id="MF_00361"/>
    </source>
</evidence>
<evidence type="ECO:0000256" key="2">
    <source>
        <dbReference type="SAM" id="MobiDB-lite"/>
    </source>
</evidence>
<protein>
    <recommendedName>
        <fullName evidence="1">NAD kinase</fullName>
        <ecNumber evidence="1">2.7.1.23</ecNumber>
    </recommendedName>
    <alternativeName>
        <fullName evidence="1">ATP-dependent NAD kinase</fullName>
    </alternativeName>
</protein>
<accession>B3DSX1</accession>
<comment type="function">
    <text evidence="1">Involved in the regulation of the intracellular balance of NAD and NADP, and is a key enzyme in the biosynthesis of NADP. Catalyzes specifically the phosphorylation on 2'-hydroxyl of the adenosine moiety of NAD to yield NADP.</text>
</comment>
<comment type="catalytic activity">
    <reaction evidence="1">
        <text>NAD(+) + ATP = ADP + NADP(+) + H(+)</text>
        <dbReference type="Rhea" id="RHEA:18629"/>
        <dbReference type="ChEBI" id="CHEBI:15378"/>
        <dbReference type="ChEBI" id="CHEBI:30616"/>
        <dbReference type="ChEBI" id="CHEBI:57540"/>
        <dbReference type="ChEBI" id="CHEBI:58349"/>
        <dbReference type="ChEBI" id="CHEBI:456216"/>
        <dbReference type="EC" id="2.7.1.23"/>
    </reaction>
</comment>
<comment type="cofactor">
    <cofactor evidence="1">
        <name>a divalent metal cation</name>
        <dbReference type="ChEBI" id="CHEBI:60240"/>
    </cofactor>
</comment>
<comment type="subcellular location">
    <subcellularLocation>
        <location evidence="1">Cytoplasm</location>
    </subcellularLocation>
</comment>
<comment type="similarity">
    <text evidence="1">Belongs to the NAD kinase family.</text>
</comment>
<reference key="1">
    <citation type="journal article" date="2008" name="BMC Genomics">
        <title>Comparative genomic analysis of the gut bacterium Bifidobacterium longum reveals loci susceptible to deletion during pure culture growth.</title>
        <authorList>
            <person name="Lee J.H."/>
            <person name="Karamychev V.N."/>
            <person name="Kozyavkin S.A."/>
            <person name="Mills D."/>
            <person name="Pavlov A.R."/>
            <person name="Pavlova N.V."/>
            <person name="Polouchine N.N."/>
            <person name="Richardson P.M."/>
            <person name="Shakhova V.V."/>
            <person name="Slesarev A.I."/>
            <person name="Weimer B."/>
            <person name="O'Sullivan D.J."/>
        </authorList>
    </citation>
    <scope>NUCLEOTIDE SEQUENCE [LARGE SCALE GENOMIC DNA]</scope>
    <source>
        <strain>DJO10A</strain>
    </source>
</reference>
<proteinExistence type="inferred from homology"/>
<dbReference type="EC" id="2.7.1.23" evidence="1"/>
<dbReference type="EMBL" id="CP000605">
    <property type="protein sequence ID" value="ACD98240.1"/>
    <property type="molecule type" value="Genomic_DNA"/>
</dbReference>
<dbReference type="RefSeq" id="WP_007051147.1">
    <property type="nucleotide sequence ID" value="NZ_AABM02000002.1"/>
</dbReference>
<dbReference type="SMR" id="B3DSX1"/>
<dbReference type="KEGG" id="blj:BLD_0794"/>
<dbReference type="HOGENOM" id="CLU_008831_0_0_11"/>
<dbReference type="Proteomes" id="UP000002419">
    <property type="component" value="Chromosome"/>
</dbReference>
<dbReference type="GO" id="GO:0005737">
    <property type="term" value="C:cytoplasm"/>
    <property type="evidence" value="ECO:0007669"/>
    <property type="project" value="UniProtKB-SubCell"/>
</dbReference>
<dbReference type="GO" id="GO:0005524">
    <property type="term" value="F:ATP binding"/>
    <property type="evidence" value="ECO:0007669"/>
    <property type="project" value="UniProtKB-KW"/>
</dbReference>
<dbReference type="GO" id="GO:0046872">
    <property type="term" value="F:metal ion binding"/>
    <property type="evidence" value="ECO:0007669"/>
    <property type="project" value="UniProtKB-UniRule"/>
</dbReference>
<dbReference type="GO" id="GO:0051287">
    <property type="term" value="F:NAD binding"/>
    <property type="evidence" value="ECO:0007669"/>
    <property type="project" value="UniProtKB-ARBA"/>
</dbReference>
<dbReference type="GO" id="GO:0003951">
    <property type="term" value="F:NAD+ kinase activity"/>
    <property type="evidence" value="ECO:0007669"/>
    <property type="project" value="UniProtKB-UniRule"/>
</dbReference>
<dbReference type="GO" id="GO:0019674">
    <property type="term" value="P:NAD metabolic process"/>
    <property type="evidence" value="ECO:0007669"/>
    <property type="project" value="InterPro"/>
</dbReference>
<dbReference type="GO" id="GO:0006741">
    <property type="term" value="P:NADP biosynthetic process"/>
    <property type="evidence" value="ECO:0007669"/>
    <property type="project" value="UniProtKB-UniRule"/>
</dbReference>
<dbReference type="Gene3D" id="3.40.50.10330">
    <property type="entry name" value="Probable inorganic polyphosphate/atp-NAD kinase, domain 1"/>
    <property type="match status" value="1"/>
</dbReference>
<dbReference type="Gene3D" id="2.60.200.30">
    <property type="entry name" value="Probable inorganic polyphosphate/atp-NAD kinase, domain 2"/>
    <property type="match status" value="1"/>
</dbReference>
<dbReference type="HAMAP" id="MF_00361">
    <property type="entry name" value="NAD_kinase"/>
    <property type="match status" value="1"/>
</dbReference>
<dbReference type="InterPro" id="IPR017438">
    <property type="entry name" value="ATP-NAD_kinase_N"/>
</dbReference>
<dbReference type="InterPro" id="IPR017437">
    <property type="entry name" value="ATP-NAD_kinase_PpnK-typ_C"/>
</dbReference>
<dbReference type="InterPro" id="IPR016064">
    <property type="entry name" value="NAD/diacylglycerol_kinase_sf"/>
</dbReference>
<dbReference type="InterPro" id="IPR002504">
    <property type="entry name" value="NADK"/>
</dbReference>
<dbReference type="NCBIfam" id="NF002892">
    <property type="entry name" value="PRK03372.1"/>
    <property type="match status" value="1"/>
</dbReference>
<dbReference type="PANTHER" id="PTHR20275">
    <property type="entry name" value="NAD KINASE"/>
    <property type="match status" value="1"/>
</dbReference>
<dbReference type="PANTHER" id="PTHR20275:SF0">
    <property type="entry name" value="NAD KINASE"/>
    <property type="match status" value="1"/>
</dbReference>
<dbReference type="Pfam" id="PF01513">
    <property type="entry name" value="NAD_kinase"/>
    <property type="match status" value="1"/>
</dbReference>
<dbReference type="Pfam" id="PF20143">
    <property type="entry name" value="NAD_kinase_C"/>
    <property type="match status" value="1"/>
</dbReference>
<dbReference type="SUPFAM" id="SSF111331">
    <property type="entry name" value="NAD kinase/diacylglycerol kinase-like"/>
    <property type="match status" value="1"/>
</dbReference>
<feature type="chain" id="PRO_1000120831" description="NAD kinase">
    <location>
        <begin position="1"/>
        <end position="340"/>
    </location>
</feature>
<feature type="region of interest" description="Disordered" evidence="2">
    <location>
        <begin position="321"/>
        <end position="340"/>
    </location>
</feature>
<feature type="compositionally biased region" description="Basic and acidic residues" evidence="2">
    <location>
        <begin position="327"/>
        <end position="340"/>
    </location>
</feature>
<feature type="active site" description="Proton acceptor" evidence="1">
    <location>
        <position position="66"/>
    </location>
</feature>
<feature type="binding site" evidence="1">
    <location>
        <begin position="66"/>
        <end position="67"/>
    </location>
    <ligand>
        <name>NAD(+)</name>
        <dbReference type="ChEBI" id="CHEBI:57540"/>
    </ligand>
</feature>
<feature type="binding site" evidence="1">
    <location>
        <position position="71"/>
    </location>
    <ligand>
        <name>NAD(+)</name>
        <dbReference type="ChEBI" id="CHEBI:57540"/>
    </ligand>
</feature>
<feature type="binding site" evidence="1">
    <location>
        <begin position="141"/>
        <end position="142"/>
    </location>
    <ligand>
        <name>NAD(+)</name>
        <dbReference type="ChEBI" id="CHEBI:57540"/>
    </ligand>
</feature>
<feature type="binding site" evidence="1">
    <location>
        <position position="152"/>
    </location>
    <ligand>
        <name>NAD(+)</name>
        <dbReference type="ChEBI" id="CHEBI:57540"/>
    </ligand>
</feature>
<feature type="binding site" evidence="1">
    <location>
        <position position="171"/>
    </location>
    <ligand>
        <name>NAD(+)</name>
        <dbReference type="ChEBI" id="CHEBI:57540"/>
    </ligand>
</feature>
<feature type="binding site" evidence="1">
    <location>
        <begin position="182"/>
        <end position="187"/>
    </location>
    <ligand>
        <name>NAD(+)</name>
        <dbReference type="ChEBI" id="CHEBI:57540"/>
    </ligand>
</feature>
<feature type="binding site" evidence="1">
    <location>
        <position position="206"/>
    </location>
    <ligand>
        <name>NAD(+)</name>
        <dbReference type="ChEBI" id="CHEBI:57540"/>
    </ligand>
</feature>
<sequence length="340" mass="36472">MAKRNAVVVTHTRLRQTGTVVAEAVSQLRVAGFEVAIIDNTEAPDFGVQPPCVSDDTEIVVVLGGDGTILRAAELVHCTQVPILGVNMGHVGFLAEFESFQIDEAIRRVSTHDYSIDERMIAHVDVWLPGATKPIEDWALNDITLERADRGKMVELSIRVDDVEMNSFGADGVIVSTPTGSTAYAFSAGGPVMWPNVKALQLIPLAAHALFARPLIIGSGSTFTIDILDDSMSEGWICCDGRRQRALPQGTRVMVRESRDTLRLARLSGVPFTNRLVSKFDLPVVGWREHARNEASSQSLHHGHTFPAAAYAAGVAVAGDAGVAGTEPDKPGERDGKAGS</sequence>